<organism>
    <name type="scientific">Aliivibrio salmonicida (strain LFI1238)</name>
    <name type="common">Vibrio salmonicida (strain LFI1238)</name>
    <dbReference type="NCBI Taxonomy" id="316275"/>
    <lineage>
        <taxon>Bacteria</taxon>
        <taxon>Pseudomonadati</taxon>
        <taxon>Pseudomonadota</taxon>
        <taxon>Gammaproteobacteria</taxon>
        <taxon>Vibrionales</taxon>
        <taxon>Vibrionaceae</taxon>
        <taxon>Aliivibrio</taxon>
    </lineage>
</organism>
<accession>B6EH91</accession>
<evidence type="ECO:0000255" key="1">
    <source>
        <dbReference type="HAMAP-Rule" id="MF_01572"/>
    </source>
</evidence>
<gene>
    <name type="ordered locus">VSAL_I1988</name>
</gene>
<feature type="chain" id="PRO_1000200756" description="UPF0397 protein VSAL_I1988">
    <location>
        <begin position="1"/>
        <end position="183"/>
    </location>
</feature>
<feature type="transmembrane region" description="Helical" evidence="1">
    <location>
        <begin position="8"/>
        <end position="28"/>
    </location>
</feature>
<feature type="transmembrane region" description="Helical" evidence="1">
    <location>
        <begin position="41"/>
        <end position="61"/>
    </location>
</feature>
<feature type="transmembrane region" description="Helical" evidence="1">
    <location>
        <begin position="74"/>
        <end position="94"/>
    </location>
</feature>
<feature type="transmembrane region" description="Helical" evidence="1">
    <location>
        <begin position="110"/>
        <end position="130"/>
    </location>
</feature>
<feature type="transmembrane region" description="Helical" evidence="1">
    <location>
        <begin position="147"/>
        <end position="167"/>
    </location>
</feature>
<reference key="1">
    <citation type="journal article" date="2008" name="BMC Genomics">
        <title>The genome sequence of the fish pathogen Aliivibrio salmonicida strain LFI1238 shows extensive evidence of gene decay.</title>
        <authorList>
            <person name="Hjerde E."/>
            <person name="Lorentzen M.S."/>
            <person name="Holden M.T."/>
            <person name="Seeger K."/>
            <person name="Paulsen S."/>
            <person name="Bason N."/>
            <person name="Churcher C."/>
            <person name="Harris D."/>
            <person name="Norbertczak H."/>
            <person name="Quail M.A."/>
            <person name="Sanders S."/>
            <person name="Thurston S."/>
            <person name="Parkhill J."/>
            <person name="Willassen N.P."/>
            <person name="Thomson N.R."/>
        </authorList>
    </citation>
    <scope>NUCLEOTIDE SEQUENCE [LARGE SCALE GENOMIC DNA]</scope>
    <source>
        <strain>LFI1238</strain>
    </source>
</reference>
<protein>
    <recommendedName>
        <fullName evidence="1">UPF0397 protein VSAL_I1988</fullName>
    </recommendedName>
</protein>
<comment type="subcellular location">
    <subcellularLocation>
        <location evidence="1">Cell membrane</location>
        <topology evidence="1">Multi-pass membrane protein</topology>
    </subcellularLocation>
</comment>
<comment type="similarity">
    <text evidence="1">Belongs to the UPF0397 family.</text>
</comment>
<name>Y1988_ALISL</name>
<proteinExistence type="inferred from homology"/>
<dbReference type="EMBL" id="FM178379">
    <property type="protein sequence ID" value="CAQ79673.1"/>
    <property type="molecule type" value="Genomic_DNA"/>
</dbReference>
<dbReference type="RefSeq" id="WP_012550548.1">
    <property type="nucleotide sequence ID" value="NC_011312.1"/>
</dbReference>
<dbReference type="SMR" id="B6EH91"/>
<dbReference type="KEGG" id="vsa:VSAL_I1988"/>
<dbReference type="eggNOG" id="COG4720">
    <property type="taxonomic scope" value="Bacteria"/>
</dbReference>
<dbReference type="HOGENOM" id="CLU_120023_0_0_6"/>
<dbReference type="Proteomes" id="UP000001730">
    <property type="component" value="Chromosome 1"/>
</dbReference>
<dbReference type="GO" id="GO:0005886">
    <property type="term" value="C:plasma membrane"/>
    <property type="evidence" value="ECO:0007669"/>
    <property type="project" value="UniProtKB-SubCell"/>
</dbReference>
<dbReference type="Gene3D" id="1.10.1760.20">
    <property type="match status" value="1"/>
</dbReference>
<dbReference type="HAMAP" id="MF_01572">
    <property type="entry name" value="UPF0397"/>
    <property type="match status" value="1"/>
</dbReference>
<dbReference type="InterPro" id="IPR009825">
    <property type="entry name" value="ECF_substrate-spec-like"/>
</dbReference>
<dbReference type="InterPro" id="IPR022914">
    <property type="entry name" value="UPF0397"/>
</dbReference>
<dbReference type="NCBIfam" id="NF010182">
    <property type="entry name" value="PRK13661.1"/>
    <property type="match status" value="1"/>
</dbReference>
<dbReference type="PANTHER" id="PTHR37815">
    <property type="entry name" value="UPF0397 PROTEIN BC_2624-RELATED"/>
    <property type="match status" value="1"/>
</dbReference>
<dbReference type="PANTHER" id="PTHR37815:SF3">
    <property type="entry name" value="UPF0397 PROTEIN SPR0429"/>
    <property type="match status" value="1"/>
</dbReference>
<dbReference type="Pfam" id="PF07155">
    <property type="entry name" value="ECF-ribofla_trS"/>
    <property type="match status" value="1"/>
</dbReference>
<sequence length="183" mass="19679">MNLSAKTVVVIAIGAALYGIGGLPMFGIPVFANTTLKPAMAVLALFSVLYGPIVGFLVGFIGHWVTDLFAGWGVWLTWILGSGIVGMIIGLFPILTKRRIEVGLFDKKDFFIFVVLAFVGNVIGYGTSAFLDTVLYAEPFTKVFAQLCIIAAGNTVLIAVVGYFILTNLAKRKKQSTHLTEAQ</sequence>
<keyword id="KW-1003">Cell membrane</keyword>
<keyword id="KW-0472">Membrane</keyword>
<keyword id="KW-0812">Transmembrane</keyword>
<keyword id="KW-1133">Transmembrane helix</keyword>